<keyword id="KW-0445">Lipid transport</keyword>
<keyword id="KW-0446">Lipid-binding</keyword>
<keyword id="KW-0496">Mitochondrion</keyword>
<keyword id="KW-1185">Reference proteome</keyword>
<keyword id="KW-0755">Steroidogenesis</keyword>
<keyword id="KW-0813">Transport</keyword>
<name>STAR_XENLA</name>
<accession>Q9DG08</accession>
<accession>Q501Q7</accession>
<gene>
    <name type="primary">star</name>
</gene>
<protein>
    <recommendedName>
        <fullName>Steroidogenic acute regulatory protein</fullName>
        <shortName>StAR</shortName>
    </recommendedName>
    <alternativeName>
        <fullName>START domain-containing protein 1</fullName>
        <shortName>StARD1</shortName>
    </alternativeName>
</protein>
<reference key="1">
    <citation type="journal article" date="2000" name="Mol. Cell. Endocrinol.">
        <title>Conservation of steroidogenic acute regulatory (StAR) protein structure and expression in vertebrates.</title>
        <authorList>
            <person name="Bauer M.P."/>
            <person name="Bridgham J.T."/>
            <person name="Langenau D.M."/>
            <person name="Johnson A.L."/>
            <person name="Goetz F.W."/>
        </authorList>
    </citation>
    <scope>NUCLEOTIDE SEQUENCE [MRNA]</scope>
    <source>
        <tissue>Ovary</tissue>
    </source>
</reference>
<reference key="2">
    <citation type="submission" date="2005-05" db="EMBL/GenBank/DDBJ databases">
        <authorList>
            <consortium name="NIH - Xenopus Gene Collection (XGC) project"/>
        </authorList>
    </citation>
    <scope>NUCLEOTIDE SEQUENCE [LARGE SCALE MRNA]</scope>
    <source>
        <tissue>Testis</tissue>
    </source>
</reference>
<feature type="chain" id="PRO_0000220651" description="Steroidogenic acute regulatory protein">
    <location>
        <begin position="1"/>
        <end position="285"/>
    </location>
</feature>
<feature type="domain" description="START" evidence="4">
    <location>
        <begin position="67"/>
        <end position="280"/>
    </location>
</feature>
<feature type="sequence conflict" description="In Ref. 1; AAG28595." evidence="5" ref="1">
    <original>M</original>
    <variation>L</variation>
    <location>
        <position position="1"/>
    </location>
</feature>
<feature type="sequence conflict" description="In Ref. 1; AAG28595." evidence="5" ref="1">
    <original>I</original>
    <variation>V</variation>
    <location>
        <position position="234"/>
    </location>
</feature>
<feature type="sequence conflict" description="In Ref. 1; AAG28595." evidence="5" ref="1">
    <original>T</original>
    <variation>A</variation>
    <location>
        <position position="276"/>
    </location>
</feature>
<feature type="sequence conflict" description="In Ref. 1; AAG28595." evidence="5" ref="1">
    <original>N</original>
    <variation>T</variation>
    <location>
        <position position="280"/>
    </location>
</feature>
<proteinExistence type="evidence at transcript level"/>
<sequence length="285" mass="31675">MLPATFKLCAGISYRHLRNMTGLRRTAAVALTHELEKLALVGPGPGKWINQIRRKSILLSSRLEEKTLNDVEMSYIKQGEEALKKSLNILGDQDGWKTEIVMENGDKVLSKVLPDIGKVFKLEAVVEKPLDNVYGELVDNMEKMGEWNPNVKEVKILQKIGKDTVITHEKAAETPGNIVGARDFVSVRCSKRRGSTCILAGMSTRFGGMPEQKGFVRGENGPTCMVLRPLAEDISKTKLTWLLSIDLKGWLPKSIINQVLSQTQVDFAKHLRSRMTSSSNALSLC</sequence>
<comment type="function">
    <text evidence="1">Plays a key role in steroid hormone synthesis by enhancing the metabolism of cholesterol into pregnenolone. Mediates the transfer of cholesterol from the outer mitochondrial membrane to the inner mitochondrial membrane where it is cleaved to pregnenolone (By similarity).</text>
</comment>
<comment type="catalytic activity">
    <reaction evidence="1">
        <text>cholesterol(in) = cholesterol(out)</text>
        <dbReference type="Rhea" id="RHEA:39747"/>
        <dbReference type="ChEBI" id="CHEBI:16113"/>
    </reaction>
</comment>
<comment type="pathway">
    <text evidence="1">Steroid metabolism; cholesterol metabolism.</text>
</comment>
<comment type="subunit">
    <text evidence="3">May interact with TSPO.</text>
</comment>
<comment type="subcellular location">
    <subcellularLocation>
        <location evidence="2">Mitochondrion</location>
    </subcellularLocation>
</comment>
<comment type="sequence caution" evidence="5">
    <conflict type="erroneous initiation">
        <sequence resource="EMBL-CDS" id="AAG28595"/>
    </conflict>
    <text>Extended N-terminus.</text>
</comment>
<evidence type="ECO:0000250" key="1">
    <source>
        <dbReference type="UniProtKB" id="P49675"/>
    </source>
</evidence>
<evidence type="ECO:0000250" key="2">
    <source>
        <dbReference type="UniProtKB" id="P51557"/>
    </source>
</evidence>
<evidence type="ECO:0000250" key="3">
    <source>
        <dbReference type="UniProtKB" id="P79245"/>
    </source>
</evidence>
<evidence type="ECO:0000255" key="4">
    <source>
        <dbReference type="PROSITE-ProRule" id="PRU00197"/>
    </source>
</evidence>
<evidence type="ECO:0000305" key="5"/>
<dbReference type="EMBL" id="AF220437">
    <property type="protein sequence ID" value="AAG28595.1"/>
    <property type="status" value="ALT_INIT"/>
    <property type="molecule type" value="mRNA"/>
</dbReference>
<dbReference type="EMBL" id="BC095917">
    <property type="protein sequence ID" value="AAH95917.1"/>
    <property type="molecule type" value="mRNA"/>
</dbReference>
<dbReference type="RefSeq" id="NP_001167502.1">
    <property type="nucleotide sequence ID" value="NM_001174031.1"/>
</dbReference>
<dbReference type="SMR" id="Q9DG08"/>
<dbReference type="DNASU" id="100381120"/>
<dbReference type="GeneID" id="100381120"/>
<dbReference type="KEGG" id="xla:100381120"/>
<dbReference type="AGR" id="Xenbase:XB-GENE-999725"/>
<dbReference type="CTD" id="100381120"/>
<dbReference type="Xenbase" id="XB-GENE-999725">
    <property type="gene designation" value="star.L"/>
</dbReference>
<dbReference type="OrthoDB" id="74575at2759"/>
<dbReference type="UniPathway" id="UPA00296"/>
<dbReference type="Proteomes" id="UP000186698">
    <property type="component" value="Chromosome 3L"/>
</dbReference>
<dbReference type="Bgee" id="100381120">
    <property type="expression patterns" value="Expressed in camera-type eye and 11 other cell types or tissues"/>
</dbReference>
<dbReference type="GO" id="GO:0005739">
    <property type="term" value="C:mitochondrion"/>
    <property type="evidence" value="ECO:0007669"/>
    <property type="project" value="UniProtKB-SubCell"/>
</dbReference>
<dbReference type="GO" id="GO:0015485">
    <property type="term" value="F:cholesterol binding"/>
    <property type="evidence" value="ECO:0000318"/>
    <property type="project" value="GO_Central"/>
</dbReference>
<dbReference type="GO" id="GO:0120020">
    <property type="term" value="F:cholesterol transfer activity"/>
    <property type="evidence" value="ECO:0007669"/>
    <property type="project" value="InterPro"/>
</dbReference>
<dbReference type="GO" id="GO:0008203">
    <property type="term" value="P:cholesterol metabolic process"/>
    <property type="evidence" value="ECO:0007669"/>
    <property type="project" value="UniProtKB-UniPathway"/>
</dbReference>
<dbReference type="GO" id="GO:0032367">
    <property type="term" value="P:intracellular cholesterol transport"/>
    <property type="evidence" value="ECO:0000318"/>
    <property type="project" value="GO_Central"/>
</dbReference>
<dbReference type="GO" id="GO:0050810">
    <property type="term" value="P:regulation of steroid biosynthetic process"/>
    <property type="evidence" value="ECO:0000318"/>
    <property type="project" value="GO_Central"/>
</dbReference>
<dbReference type="GO" id="GO:0006694">
    <property type="term" value="P:steroid biosynthetic process"/>
    <property type="evidence" value="ECO:0000318"/>
    <property type="project" value="GO_Central"/>
</dbReference>
<dbReference type="CDD" id="cd08905">
    <property type="entry name" value="START_STARD1-like"/>
    <property type="match status" value="1"/>
</dbReference>
<dbReference type="FunFam" id="3.30.530.20:FF:000015">
    <property type="entry name" value="Steroidogenic acute regulatory protein, mitochondrial"/>
    <property type="match status" value="1"/>
</dbReference>
<dbReference type="Gene3D" id="3.30.530.20">
    <property type="match status" value="1"/>
</dbReference>
<dbReference type="InterPro" id="IPR029866">
    <property type="entry name" value="StAR"/>
</dbReference>
<dbReference type="InterPro" id="IPR000799">
    <property type="entry name" value="StAR-like"/>
</dbReference>
<dbReference type="InterPro" id="IPR023393">
    <property type="entry name" value="START-like_dom_sf"/>
</dbReference>
<dbReference type="InterPro" id="IPR002913">
    <property type="entry name" value="START_lipid-bd_dom"/>
</dbReference>
<dbReference type="PANTHER" id="PTHR46489:SF4">
    <property type="entry name" value="STEROIDOGENIC ACUTE REGULATORY PROTEIN"/>
    <property type="match status" value="1"/>
</dbReference>
<dbReference type="PANTHER" id="PTHR46489">
    <property type="entry name" value="STEROIDOGENIC ACUTE REGULATORY PROTEIN, MITOCHONDRIAL"/>
    <property type="match status" value="1"/>
</dbReference>
<dbReference type="Pfam" id="PF01852">
    <property type="entry name" value="START"/>
    <property type="match status" value="1"/>
</dbReference>
<dbReference type="PRINTS" id="PR00978">
    <property type="entry name" value="STARPROTEIN"/>
</dbReference>
<dbReference type="SMART" id="SM00234">
    <property type="entry name" value="START"/>
    <property type="match status" value="1"/>
</dbReference>
<dbReference type="SUPFAM" id="SSF55961">
    <property type="entry name" value="Bet v1-like"/>
    <property type="match status" value="1"/>
</dbReference>
<dbReference type="PROSITE" id="PS50848">
    <property type="entry name" value="START"/>
    <property type="match status" value="1"/>
</dbReference>
<organism>
    <name type="scientific">Xenopus laevis</name>
    <name type="common">African clawed frog</name>
    <dbReference type="NCBI Taxonomy" id="8355"/>
    <lineage>
        <taxon>Eukaryota</taxon>
        <taxon>Metazoa</taxon>
        <taxon>Chordata</taxon>
        <taxon>Craniata</taxon>
        <taxon>Vertebrata</taxon>
        <taxon>Euteleostomi</taxon>
        <taxon>Amphibia</taxon>
        <taxon>Batrachia</taxon>
        <taxon>Anura</taxon>
        <taxon>Pipoidea</taxon>
        <taxon>Pipidae</taxon>
        <taxon>Xenopodinae</taxon>
        <taxon>Xenopus</taxon>
        <taxon>Xenopus</taxon>
    </lineage>
</organism>